<sequence>MAHVRNKKSDDKKAMVVAKEDTNKSESEGVTKLQTYLKTIPIAKKKFAKLPKRKKSPTSAELLLIDPRYSASKEGPLGLGPIVLPFVQRFNNIDGFMTLYVAAVLIHGALFAVVDMTLNIYQVQFSLTRTEWYLMDFSDYIASFVVAIIIAHFGSKGNRTRWIAASCILMGLESMLFAFPFFTYEIIIPGRQSIELCMEENEKRNIICGNSVPNRSKCIYFHIAGQCIHGIAGMPIYILGITFIFDHIPTSSCGFYLAIGHSAYLIGYLLGMVGGLQNFQPPPKEKTVEIEPAKVYQLLQSGWWKTFLIIAAISFCVSFMMVCFPTSLPGAHKLRLAKRKEPPTIDRRLKDMKIQPHLKGFLHNIWHILKNPLMLTQAICKVSEYLTFNTSLYFLPHHLQTQFLITPGIASLLTGAFVLPGGIIGHFLGGLIVDRLEMTNKNKLKFTLVTTVVSVGLFLLIFFVECQTTTFAGINEDYDGYGQLGNLTADCNEYCDCTTSLYTSICGRDEKEYFSPCFAGCKATKVSQTEKTYYNCSCIKEGLAASDDEGQFIDAIAGTCDSDCLKLPLFFAFYFSATVFSNMCSIPVISIILQSVPANFTSLSLGVTYAIVKFVASVPAPLLFRLSSAIACIYWDNNRCGGKERCWIYNKNILVYEFMGIWMSSQLIIVLLNIYAIQIHDVVVHGEITESKTTVKDVKEQKERKA</sequence>
<comment type="function">
    <text evidence="5">Auxiliary component of the CatSper complex, a complex involved in sperm cell hyperactivation.</text>
</comment>
<comment type="subunit">
    <text evidence="1 5 6">Component of the CatSper complex or CatSpermasome composed of the core pore-forming members CATSPER1, CATSPER2, CATSPER3 and CATSPER4 as well as auxiliary members CATSPERB, CATSPERG2, CATSPERD, CATSPERE, CATSPERZ, C2CD6/CATSPERT, SLCO6C1, TMEM249, TMEM262 and EFCAB9 (PubMed:34225353). HSPA1 may be an additional auxiliary complex member (By similarity). The core complex members CATSPER1, CATSPER2, CATSPER3 and CATSPER4 form a heterotetrameric channel (PubMed:34225353). The auxiliary CATSPERB, CATSPERG2, CATSPERD and CATSPERE subunits form a pavilion-like structure over the pore which stabilizes the complex through interactions with CATSPER4, CATSPER3, CATSPER1 and CATSPER2 respectively (PubMed:34225353). SLCO6C1 interacts with CATSPERE and TMEM262/CATSPERH interacts with CATSPERB, further stabilizing the complex (By similarity) (PubMed:34225353). C2CD6/CATSPERT interacts at least with CATSPERD and is required for targeting the CatSper complex in the flagellar membrane (Probable).</text>
</comment>
<comment type="subcellular location">
    <subcellularLocation>
        <location evidence="6">Cell projection</location>
        <location evidence="6">Cilium</location>
        <location evidence="6">Flagellum membrane</location>
        <topology evidence="5">Multi-pass membrane protein</topology>
    </subcellularLocation>
</comment>
<comment type="alternative products">
    <event type="alternative splicing"/>
    <isoform>
        <id>Q8C0X7-1</id>
        <name>1</name>
        <sequence type="displayed"/>
    </isoform>
    <isoform>
        <id>Q8C0X7-2</id>
        <name>2</name>
        <sequence type="described" ref="VSP_061423"/>
    </isoform>
</comment>
<comment type="similarity">
    <text evidence="6">Belongs to the organo anion transporter (TC 2.A.60) family.</text>
</comment>
<keyword id="KW-0002">3D-structure</keyword>
<keyword id="KW-0025">Alternative splicing</keyword>
<keyword id="KW-1003">Cell membrane</keyword>
<keyword id="KW-0966">Cell projection</keyword>
<keyword id="KW-0969">Cilium</keyword>
<keyword id="KW-1015">Disulfide bond</keyword>
<keyword id="KW-0282">Flagellum</keyword>
<keyword id="KW-0325">Glycoprotein</keyword>
<keyword id="KW-0472">Membrane</keyword>
<keyword id="KW-1185">Reference proteome</keyword>
<keyword id="KW-0812">Transmembrane</keyword>
<keyword id="KW-1133">Transmembrane helix</keyword>
<keyword id="KW-0813">Transport</keyword>
<accession>Q8C0X7</accession>
<accession>Q3V161</accession>
<accession>Q9D4B7</accession>
<dbReference type="EMBL" id="AK029505">
    <property type="protein sequence ID" value="BAC26482.1"/>
    <property type="molecule type" value="mRNA"/>
</dbReference>
<dbReference type="EMBL" id="AK016647">
    <property type="protein sequence ID" value="BAB30358.1"/>
    <property type="molecule type" value="mRNA"/>
</dbReference>
<dbReference type="EMBL" id="AK132668">
    <property type="protein sequence ID" value="BAE21291.1"/>
    <property type="molecule type" value="mRNA"/>
</dbReference>
<dbReference type="EMBL" id="AK161249">
    <property type="protein sequence ID" value="BAE36268.1"/>
    <property type="molecule type" value="mRNA"/>
</dbReference>
<dbReference type="EMBL" id="BC139066">
    <property type="protein sequence ID" value="AAI39067.1"/>
    <property type="molecule type" value="mRNA"/>
</dbReference>
<dbReference type="EMBL" id="BC139067">
    <property type="protein sequence ID" value="AAI39068.1"/>
    <property type="molecule type" value="mRNA"/>
</dbReference>
<dbReference type="CCDS" id="CCDS35677.1">
    <molecule id="Q8C0X7-1"/>
</dbReference>
<dbReference type="RefSeq" id="NP_083218.1">
    <molecule id="Q8C0X7-1"/>
    <property type="nucleotide sequence ID" value="NM_028942.4"/>
</dbReference>
<dbReference type="PDB" id="7EEB">
    <property type="method" value="EM"/>
    <property type="resolution" value="2.90 A"/>
    <property type="chains" value="L=1-706"/>
</dbReference>
<dbReference type="PDBsum" id="7EEB"/>
<dbReference type="EMDB" id="EMD-31076"/>
<dbReference type="SMR" id="Q8C0X7"/>
<dbReference type="ComplexPortal" id="CPX-9078">
    <property type="entry name" value="CatSpermasome complex, gamma subunit variant 2"/>
</dbReference>
<dbReference type="STRING" id="10090.ENSMUSP00000027569"/>
<dbReference type="TCDB" id="1.A.1.19.1">
    <property type="family name" value="the voltage-gated ion channel (vic) superfamily"/>
</dbReference>
<dbReference type="GlyCosmos" id="Q8C0X7">
    <property type="glycosylation" value="3 sites, No reported glycans"/>
</dbReference>
<dbReference type="GlyGen" id="Q8C0X7">
    <property type="glycosylation" value="3 sites"/>
</dbReference>
<dbReference type="iPTMnet" id="Q8C0X7"/>
<dbReference type="PhosphoSitePlus" id="Q8C0X7"/>
<dbReference type="SwissPalm" id="Q8C0X7"/>
<dbReference type="PaxDb" id="10090-ENSMUSP00000027569"/>
<dbReference type="ProteomicsDB" id="335142"/>
<dbReference type="ProteomicsDB" id="336751"/>
<dbReference type="DNASU" id="74441"/>
<dbReference type="Ensembl" id="ENSMUST00000027569.14">
    <molecule id="Q8C0X7-1"/>
    <property type="protein sequence ID" value="ENSMUSP00000027569.8"/>
    <property type="gene ID" value="ENSMUSG00000026331.14"/>
</dbReference>
<dbReference type="Ensembl" id="ENSMUST00000189547.2">
    <molecule id="Q8C0X7-2"/>
    <property type="protein sequence ID" value="ENSMUSP00000140791.2"/>
    <property type="gene ID" value="ENSMUSG00000026331.14"/>
</dbReference>
<dbReference type="GeneID" id="74441"/>
<dbReference type="KEGG" id="mmu:74441"/>
<dbReference type="UCSC" id="uc007cff.1">
    <molecule id="Q8C0X7-1"/>
    <property type="organism name" value="mouse"/>
</dbReference>
<dbReference type="UCSC" id="uc011wpv.1">
    <property type="organism name" value="mouse"/>
</dbReference>
<dbReference type="AGR" id="MGI:1921691"/>
<dbReference type="CTD" id="74441"/>
<dbReference type="MGI" id="MGI:1921691">
    <property type="gene designation" value="Slco6c1"/>
</dbReference>
<dbReference type="VEuPathDB" id="HostDB:ENSMUSG00000026331"/>
<dbReference type="eggNOG" id="KOG3626">
    <property type="taxonomic scope" value="Eukaryota"/>
</dbReference>
<dbReference type="GeneTree" id="ENSGT01130000278287"/>
<dbReference type="HOGENOM" id="CLU_008954_2_1_1"/>
<dbReference type="InParanoid" id="Q8C0X7"/>
<dbReference type="OMA" id="NIYAIHI"/>
<dbReference type="OrthoDB" id="5062115at2759"/>
<dbReference type="PhylomeDB" id="Q8C0X7"/>
<dbReference type="TreeFam" id="TF317540"/>
<dbReference type="BioGRID-ORCS" id="74441">
    <property type="hits" value="4 hits in 76 CRISPR screens"/>
</dbReference>
<dbReference type="PRO" id="PR:Q8C0X7"/>
<dbReference type="Proteomes" id="UP000000589">
    <property type="component" value="Chromosome 1"/>
</dbReference>
<dbReference type="RNAct" id="Q8C0X7">
    <property type="molecule type" value="protein"/>
</dbReference>
<dbReference type="Bgee" id="ENSMUSG00000026331">
    <property type="expression patterns" value="Expressed in spermatocyte and 3 other cell types or tissues"/>
</dbReference>
<dbReference type="ExpressionAtlas" id="Q8C0X7">
    <property type="expression patterns" value="baseline and differential"/>
</dbReference>
<dbReference type="GO" id="GO:0036128">
    <property type="term" value="C:CatSper complex"/>
    <property type="evidence" value="ECO:0000314"/>
    <property type="project" value="UniProtKB"/>
</dbReference>
<dbReference type="GO" id="GO:0031514">
    <property type="term" value="C:motile cilium"/>
    <property type="evidence" value="ECO:0007669"/>
    <property type="project" value="UniProtKB-KW"/>
</dbReference>
<dbReference type="GO" id="GO:0005886">
    <property type="term" value="C:plasma membrane"/>
    <property type="evidence" value="ECO:0000266"/>
    <property type="project" value="MGI"/>
</dbReference>
<dbReference type="GO" id="GO:0008514">
    <property type="term" value="F:organic anion transmembrane transporter activity"/>
    <property type="evidence" value="ECO:0000266"/>
    <property type="project" value="MGI"/>
</dbReference>
<dbReference type="GO" id="GO:0015711">
    <property type="term" value="P:organic anion transport"/>
    <property type="evidence" value="ECO:0000266"/>
    <property type="project" value="MGI"/>
</dbReference>
<dbReference type="CDD" id="cd17405">
    <property type="entry name" value="MFS_SLCO6_OATP6"/>
    <property type="match status" value="1"/>
</dbReference>
<dbReference type="FunFam" id="1.20.1250.20:FF:000363">
    <property type="entry name" value="Solute carrier organic anion transporter family member"/>
    <property type="match status" value="1"/>
</dbReference>
<dbReference type="FunFam" id="1.20.1250.20:FF:000384">
    <property type="entry name" value="Solute carrier organic anion transporter family member"/>
    <property type="match status" value="1"/>
</dbReference>
<dbReference type="Gene3D" id="1.20.1250.20">
    <property type="entry name" value="MFS general substrate transporter like domains"/>
    <property type="match status" value="2"/>
</dbReference>
<dbReference type="InterPro" id="IPR002350">
    <property type="entry name" value="Kazal_dom"/>
</dbReference>
<dbReference type="InterPro" id="IPR036058">
    <property type="entry name" value="Kazal_dom_sf"/>
</dbReference>
<dbReference type="InterPro" id="IPR036259">
    <property type="entry name" value="MFS_trans_sf"/>
</dbReference>
<dbReference type="InterPro" id="IPR004156">
    <property type="entry name" value="OATP"/>
</dbReference>
<dbReference type="PANTHER" id="PTHR11388">
    <property type="entry name" value="ORGANIC ANION TRANSPORTER"/>
    <property type="match status" value="1"/>
</dbReference>
<dbReference type="PANTHER" id="PTHR11388:SF129">
    <property type="entry name" value="SOLUTE CARRIER ORGANIC ANION TRANSPORTER FAMILY MEMBER 6C1"/>
    <property type="match status" value="1"/>
</dbReference>
<dbReference type="Pfam" id="PF07648">
    <property type="entry name" value="Kazal_2"/>
    <property type="match status" value="1"/>
</dbReference>
<dbReference type="Pfam" id="PF03137">
    <property type="entry name" value="OATP"/>
    <property type="match status" value="1"/>
</dbReference>
<dbReference type="SUPFAM" id="SSF100895">
    <property type="entry name" value="Kazal-type serine protease inhibitors"/>
    <property type="match status" value="1"/>
</dbReference>
<dbReference type="SUPFAM" id="SSF103473">
    <property type="entry name" value="MFS general substrate transporter"/>
    <property type="match status" value="1"/>
</dbReference>
<dbReference type="PROSITE" id="PS51465">
    <property type="entry name" value="KAZAL_2"/>
    <property type="match status" value="1"/>
</dbReference>
<organism evidence="8">
    <name type="scientific">Mus musculus</name>
    <name type="common">Mouse</name>
    <dbReference type="NCBI Taxonomy" id="10090"/>
    <lineage>
        <taxon>Eukaryota</taxon>
        <taxon>Metazoa</taxon>
        <taxon>Chordata</taxon>
        <taxon>Craniata</taxon>
        <taxon>Vertebrata</taxon>
        <taxon>Euteleostomi</taxon>
        <taxon>Mammalia</taxon>
        <taxon>Eutheria</taxon>
        <taxon>Euarchontoglires</taxon>
        <taxon>Glires</taxon>
        <taxon>Rodentia</taxon>
        <taxon>Myomorpha</taxon>
        <taxon>Muroidea</taxon>
        <taxon>Muridae</taxon>
        <taxon>Murinae</taxon>
        <taxon>Mus</taxon>
        <taxon>Mus</taxon>
    </lineage>
</organism>
<reference evidence="8" key="1">
    <citation type="journal article" date="2005" name="Science">
        <title>The transcriptional landscape of the mammalian genome.</title>
        <authorList>
            <person name="Carninci P."/>
            <person name="Kasukawa T."/>
            <person name="Katayama S."/>
            <person name="Gough J."/>
            <person name="Frith M.C."/>
            <person name="Maeda N."/>
            <person name="Oyama R."/>
            <person name="Ravasi T."/>
            <person name="Lenhard B."/>
            <person name="Wells C."/>
            <person name="Kodzius R."/>
            <person name="Shimokawa K."/>
            <person name="Bajic V.B."/>
            <person name="Brenner S.E."/>
            <person name="Batalov S."/>
            <person name="Forrest A.R."/>
            <person name="Zavolan M."/>
            <person name="Davis M.J."/>
            <person name="Wilming L.G."/>
            <person name="Aidinis V."/>
            <person name="Allen J.E."/>
            <person name="Ambesi-Impiombato A."/>
            <person name="Apweiler R."/>
            <person name="Aturaliya R.N."/>
            <person name="Bailey T.L."/>
            <person name="Bansal M."/>
            <person name="Baxter L."/>
            <person name="Beisel K.W."/>
            <person name="Bersano T."/>
            <person name="Bono H."/>
            <person name="Chalk A.M."/>
            <person name="Chiu K.P."/>
            <person name="Choudhary V."/>
            <person name="Christoffels A."/>
            <person name="Clutterbuck D.R."/>
            <person name="Crowe M.L."/>
            <person name="Dalla E."/>
            <person name="Dalrymple B.P."/>
            <person name="de Bono B."/>
            <person name="Della Gatta G."/>
            <person name="di Bernardo D."/>
            <person name="Down T."/>
            <person name="Engstrom P."/>
            <person name="Fagiolini M."/>
            <person name="Faulkner G."/>
            <person name="Fletcher C.F."/>
            <person name="Fukushima T."/>
            <person name="Furuno M."/>
            <person name="Futaki S."/>
            <person name="Gariboldi M."/>
            <person name="Georgii-Hemming P."/>
            <person name="Gingeras T.R."/>
            <person name="Gojobori T."/>
            <person name="Green R.E."/>
            <person name="Gustincich S."/>
            <person name="Harbers M."/>
            <person name="Hayashi Y."/>
            <person name="Hensch T.K."/>
            <person name="Hirokawa N."/>
            <person name="Hill D."/>
            <person name="Huminiecki L."/>
            <person name="Iacono M."/>
            <person name="Ikeo K."/>
            <person name="Iwama A."/>
            <person name="Ishikawa T."/>
            <person name="Jakt M."/>
            <person name="Kanapin A."/>
            <person name="Katoh M."/>
            <person name="Kawasawa Y."/>
            <person name="Kelso J."/>
            <person name="Kitamura H."/>
            <person name="Kitano H."/>
            <person name="Kollias G."/>
            <person name="Krishnan S.P."/>
            <person name="Kruger A."/>
            <person name="Kummerfeld S.K."/>
            <person name="Kurochkin I.V."/>
            <person name="Lareau L.F."/>
            <person name="Lazarevic D."/>
            <person name="Lipovich L."/>
            <person name="Liu J."/>
            <person name="Liuni S."/>
            <person name="McWilliam S."/>
            <person name="Madan Babu M."/>
            <person name="Madera M."/>
            <person name="Marchionni L."/>
            <person name="Matsuda H."/>
            <person name="Matsuzawa S."/>
            <person name="Miki H."/>
            <person name="Mignone F."/>
            <person name="Miyake S."/>
            <person name="Morris K."/>
            <person name="Mottagui-Tabar S."/>
            <person name="Mulder N."/>
            <person name="Nakano N."/>
            <person name="Nakauchi H."/>
            <person name="Ng P."/>
            <person name="Nilsson R."/>
            <person name="Nishiguchi S."/>
            <person name="Nishikawa S."/>
            <person name="Nori F."/>
            <person name="Ohara O."/>
            <person name="Okazaki Y."/>
            <person name="Orlando V."/>
            <person name="Pang K.C."/>
            <person name="Pavan W.J."/>
            <person name="Pavesi G."/>
            <person name="Pesole G."/>
            <person name="Petrovsky N."/>
            <person name="Piazza S."/>
            <person name="Reed J."/>
            <person name="Reid J.F."/>
            <person name="Ring B.Z."/>
            <person name="Ringwald M."/>
            <person name="Rost B."/>
            <person name="Ruan Y."/>
            <person name="Salzberg S.L."/>
            <person name="Sandelin A."/>
            <person name="Schneider C."/>
            <person name="Schoenbach C."/>
            <person name="Sekiguchi K."/>
            <person name="Semple C.A."/>
            <person name="Seno S."/>
            <person name="Sessa L."/>
            <person name="Sheng Y."/>
            <person name="Shibata Y."/>
            <person name="Shimada H."/>
            <person name="Shimada K."/>
            <person name="Silva D."/>
            <person name="Sinclair B."/>
            <person name="Sperling S."/>
            <person name="Stupka E."/>
            <person name="Sugiura K."/>
            <person name="Sultana R."/>
            <person name="Takenaka Y."/>
            <person name="Taki K."/>
            <person name="Tammoja K."/>
            <person name="Tan S.L."/>
            <person name="Tang S."/>
            <person name="Taylor M.S."/>
            <person name="Tegner J."/>
            <person name="Teichmann S.A."/>
            <person name="Ueda H.R."/>
            <person name="van Nimwegen E."/>
            <person name="Verardo R."/>
            <person name="Wei C.L."/>
            <person name="Yagi K."/>
            <person name="Yamanishi H."/>
            <person name="Zabarovsky E."/>
            <person name="Zhu S."/>
            <person name="Zimmer A."/>
            <person name="Hide W."/>
            <person name="Bult C."/>
            <person name="Grimmond S.M."/>
            <person name="Teasdale R.D."/>
            <person name="Liu E.T."/>
            <person name="Brusic V."/>
            <person name="Quackenbush J."/>
            <person name="Wahlestedt C."/>
            <person name="Mattick J.S."/>
            <person name="Hume D.A."/>
            <person name="Kai C."/>
            <person name="Sasaki D."/>
            <person name="Tomaru Y."/>
            <person name="Fukuda S."/>
            <person name="Kanamori-Katayama M."/>
            <person name="Suzuki M."/>
            <person name="Aoki J."/>
            <person name="Arakawa T."/>
            <person name="Iida J."/>
            <person name="Imamura K."/>
            <person name="Itoh M."/>
            <person name="Kato T."/>
            <person name="Kawaji H."/>
            <person name="Kawagashira N."/>
            <person name="Kawashima T."/>
            <person name="Kojima M."/>
            <person name="Kondo S."/>
            <person name="Konno H."/>
            <person name="Nakano K."/>
            <person name="Ninomiya N."/>
            <person name="Nishio T."/>
            <person name="Okada M."/>
            <person name="Plessy C."/>
            <person name="Shibata K."/>
            <person name="Shiraki T."/>
            <person name="Suzuki S."/>
            <person name="Tagami M."/>
            <person name="Waki K."/>
            <person name="Watahiki A."/>
            <person name="Okamura-Oho Y."/>
            <person name="Suzuki H."/>
            <person name="Kawai J."/>
            <person name="Hayashizaki Y."/>
        </authorList>
    </citation>
    <scope>NUCLEOTIDE SEQUENCE [LARGE SCALE MRNA] (ISOFORMS 1 AND 2)</scope>
    <source>
        <strain evidence="8">C57BL/6J</strain>
        <tissue evidence="8">Testis</tissue>
    </source>
</reference>
<reference evidence="10" key="2">
    <citation type="journal article" date="2009" name="PLoS Biol.">
        <title>Lineage-specific biology revealed by a finished genome assembly of the mouse.</title>
        <authorList>
            <person name="Church D.M."/>
            <person name="Goodstadt L."/>
            <person name="Hillier L.W."/>
            <person name="Zody M.C."/>
            <person name="Goldstein S."/>
            <person name="She X."/>
            <person name="Bult C.J."/>
            <person name="Agarwala R."/>
            <person name="Cherry J.L."/>
            <person name="DiCuccio M."/>
            <person name="Hlavina W."/>
            <person name="Kapustin Y."/>
            <person name="Meric P."/>
            <person name="Maglott D."/>
            <person name="Birtle Z."/>
            <person name="Marques A.C."/>
            <person name="Graves T."/>
            <person name="Zhou S."/>
            <person name="Teague B."/>
            <person name="Potamousis K."/>
            <person name="Churas C."/>
            <person name="Place M."/>
            <person name="Herschleb J."/>
            <person name="Runnheim R."/>
            <person name="Forrest D."/>
            <person name="Amos-Landgraf J."/>
            <person name="Schwartz D.C."/>
            <person name="Cheng Z."/>
            <person name="Lindblad-Toh K."/>
            <person name="Eichler E.E."/>
            <person name="Ponting C.P."/>
        </authorList>
    </citation>
    <scope>NUCLEOTIDE SEQUENCE [LARGE SCALE GENOMIC DNA]</scope>
    <source>
        <strain evidence="10">C57BL/6J</strain>
    </source>
</reference>
<reference evidence="7" key="3">
    <citation type="journal article" date="2004" name="Genome Res.">
        <title>The status, quality, and expansion of the NIH full-length cDNA project: the Mammalian Gene Collection (MGC).</title>
        <authorList>
            <consortium name="The MGC Project Team"/>
        </authorList>
    </citation>
    <scope>NUCLEOTIDE SEQUENCE [LARGE SCALE MRNA] (ISOFORM 1)</scope>
    <source>
        <tissue evidence="7">Testis</tissue>
    </source>
</reference>
<reference evidence="11" key="4">
    <citation type="journal article" date="2010" name="Cell">
        <title>A tissue-specific atlas of mouse protein phosphorylation and expression.</title>
        <authorList>
            <person name="Huttlin E.L."/>
            <person name="Jedrychowski M.P."/>
            <person name="Elias J.E."/>
            <person name="Goswami T."/>
            <person name="Rad R."/>
            <person name="Beausoleil S.A."/>
            <person name="Villen J."/>
            <person name="Haas W."/>
            <person name="Sowa M.E."/>
            <person name="Gygi S.P."/>
        </authorList>
    </citation>
    <scope>IDENTIFICATION BY MASS SPECTROMETRY [LARGE SCALE ANALYSIS]</scope>
</reference>
<reference evidence="6" key="5">
    <citation type="journal article" date="2021" name="Nature">
        <title>Structure of a mammalian sperm cation channel complex.</title>
        <authorList>
            <person name="Lin S."/>
            <person name="Ke M."/>
            <person name="Zhang Y."/>
            <person name="Yan Z."/>
            <person name="Wu J."/>
        </authorList>
    </citation>
    <scope>STRUCTURE BY ELECTRON MICROSCOPY (2.9 ANGSTROMS) OF THE CATSPER COMPLEX</scope>
    <scope>IDENTIFICATION BY MASS SPECTROMETRY</scope>
    <scope>FUNCTION</scope>
    <scope>TRANSMEMBRANE DOMAINS</scope>
    <scope>TOPOLOGY</scope>
    <scope>GLYCOSYLATION AT ASN-535</scope>
</reference>
<proteinExistence type="evidence at protein level"/>
<name>SO6C1_MOUSE</name>
<evidence type="ECO:0000250" key="1">
    <source>
        <dbReference type="UniProtKB" id="Q91ZR5"/>
    </source>
</evidence>
<evidence type="ECO:0000255" key="2"/>
<evidence type="ECO:0000255" key="3">
    <source>
        <dbReference type="PROSITE-ProRule" id="PRU00798"/>
    </source>
</evidence>
<evidence type="ECO:0000256" key="4">
    <source>
        <dbReference type="SAM" id="MobiDB-lite"/>
    </source>
</evidence>
<evidence type="ECO:0000269" key="5">
    <source>
    </source>
</evidence>
<evidence type="ECO:0000305" key="6"/>
<evidence type="ECO:0000312" key="7">
    <source>
        <dbReference type="EMBL" id="AAI39067.1"/>
    </source>
</evidence>
<evidence type="ECO:0000312" key="8">
    <source>
        <dbReference type="EMBL" id="BAC26482.1"/>
    </source>
</evidence>
<evidence type="ECO:0000312" key="9">
    <source>
        <dbReference type="MGI" id="MGI:1921691"/>
    </source>
</evidence>
<evidence type="ECO:0000312" key="10">
    <source>
        <dbReference type="Proteomes" id="UP000000589"/>
    </source>
</evidence>
<evidence type="ECO:0007744" key="11">
    <source>
    </source>
</evidence>
<evidence type="ECO:0007829" key="12">
    <source>
        <dbReference type="PDB" id="7EEB"/>
    </source>
</evidence>
<protein>
    <recommendedName>
        <fullName evidence="9">Solute carrier organic anion transporter family member 6C1</fullName>
    </recommendedName>
</protein>
<feature type="chain" id="PRO_0000454937" description="Solute carrier organic anion transporter family member 6C1">
    <location>
        <begin position="1"/>
        <end position="706"/>
    </location>
</feature>
<feature type="topological domain" description="Cytoplasmic" evidence="5">
    <location>
        <begin position="1"/>
        <end position="94"/>
    </location>
</feature>
<feature type="transmembrane region" description="Helical; Name=1" evidence="5">
    <location>
        <begin position="95"/>
        <end position="118"/>
    </location>
</feature>
<feature type="topological domain" description="Extracellular" evidence="5">
    <location>
        <begin position="119"/>
        <end position="130"/>
    </location>
</feature>
<feature type="transmembrane region" description="Helical; Name=2" evidence="5">
    <location>
        <begin position="131"/>
        <end position="151"/>
    </location>
</feature>
<feature type="topological domain" description="Cytoplasmic" evidence="5">
    <location>
        <begin position="152"/>
        <end position="159"/>
    </location>
</feature>
<feature type="transmembrane region" description="Helical; Name=3" evidence="5">
    <location>
        <begin position="160"/>
        <end position="180"/>
    </location>
</feature>
<feature type="topological domain" description="Extracellular" evidence="5">
    <location>
        <begin position="181"/>
        <end position="218"/>
    </location>
</feature>
<feature type="transmembrane region" description="Helical; Name=4" evidence="5">
    <location>
        <begin position="219"/>
        <end position="241"/>
    </location>
</feature>
<feature type="topological domain" description="Cytoplasmic" evidence="5">
    <location>
        <begin position="242"/>
        <end position="253"/>
    </location>
</feature>
<feature type="transmembrane region" description="Helical; Name=5" evidence="5">
    <location>
        <begin position="254"/>
        <end position="277"/>
    </location>
</feature>
<feature type="topological domain" description="Extracellular" evidence="5">
    <location>
        <begin position="278"/>
        <end position="301"/>
    </location>
</feature>
<feature type="transmembrane region" description="Helical; Name=6" evidence="5">
    <location>
        <begin position="302"/>
        <end position="324"/>
    </location>
</feature>
<feature type="topological domain" description="Cytoplasmic" evidence="5">
    <location>
        <begin position="325"/>
        <end position="374"/>
    </location>
</feature>
<feature type="transmembrane region" description="Helical; Name=7" evidence="5">
    <location>
        <begin position="375"/>
        <end position="396"/>
    </location>
</feature>
<feature type="topological domain" description="Extracellular" evidence="5">
    <location>
        <begin position="397"/>
        <end position="410"/>
    </location>
</feature>
<feature type="transmembrane region" description="Helical; Name=8" evidence="5">
    <location>
        <begin position="411"/>
        <end position="432"/>
    </location>
</feature>
<feature type="topological domain" description="Cytoplasmic" evidence="5">
    <location>
        <begin position="433"/>
        <end position="445"/>
    </location>
</feature>
<feature type="transmembrane region" description="Helical; Name=9" evidence="5">
    <location>
        <begin position="446"/>
        <end position="466"/>
    </location>
</feature>
<feature type="topological domain" description="Extracellular" evidence="5">
    <location>
        <begin position="467"/>
        <end position="565"/>
    </location>
</feature>
<feature type="transmembrane region" description="Helical; Name=10" evidence="5">
    <location>
        <begin position="566"/>
        <end position="589"/>
    </location>
</feature>
<feature type="topological domain" description="Cytoplasmic" evidence="5">
    <location>
        <begin position="590"/>
        <end position="604"/>
    </location>
</feature>
<feature type="transmembrane region" description="Helical; Name=11" evidence="5">
    <location>
        <begin position="605"/>
        <end position="624"/>
    </location>
</feature>
<feature type="topological domain" description="Extracellular" evidence="5">
    <location>
        <begin position="625"/>
        <end position="652"/>
    </location>
</feature>
<feature type="transmembrane region" description="Helical; Name=12" evidence="5">
    <location>
        <begin position="653"/>
        <end position="675"/>
    </location>
</feature>
<feature type="topological domain" description="Cytoplasmic" evidence="5">
    <location>
        <begin position="676"/>
        <end position="706"/>
    </location>
</feature>
<feature type="domain" description="Kazal-like" evidence="3">
    <location>
        <begin position="485"/>
        <end position="540"/>
    </location>
</feature>
<feature type="region of interest" description="Disordered" evidence="4">
    <location>
        <begin position="1"/>
        <end position="24"/>
    </location>
</feature>
<feature type="compositionally biased region" description="Basic and acidic residues" evidence="4">
    <location>
        <begin position="7"/>
        <end position="24"/>
    </location>
</feature>
<feature type="site" description="Reactive bond" evidence="3">
    <location>
        <begin position="499"/>
        <end position="500"/>
    </location>
</feature>
<feature type="glycosylation site" description="N-linked (GlcNAc...) asparagine" evidence="2">
    <location>
        <position position="214"/>
    </location>
</feature>
<feature type="glycosylation site" description="N-linked (GlcNAc...) asparagine" evidence="2">
    <location>
        <position position="486"/>
    </location>
</feature>
<feature type="glycosylation site" description="N-linked (GlcNAc...) asparagine" evidence="5">
    <location>
        <position position="535"/>
    </location>
</feature>
<feature type="disulfide bond" evidence="3">
    <location>
        <begin position="491"/>
        <end position="521"/>
    </location>
</feature>
<feature type="disulfide bond" evidence="3">
    <location>
        <begin position="497"/>
        <end position="517"/>
    </location>
</feature>
<feature type="disulfide bond" evidence="3">
    <location>
        <begin position="506"/>
        <end position="538"/>
    </location>
</feature>
<feature type="splice variant" id="VSP_061423" description="In isoform 2." evidence="6">
    <location>
        <begin position="195"/>
        <end position="211"/>
    </location>
</feature>
<feature type="sequence conflict" description="In Ref. 1; BAE21291." evidence="6" ref="1">
    <original>A</original>
    <variation>G</variation>
    <location>
        <position position="224"/>
    </location>
</feature>
<feature type="helix" evidence="12">
    <location>
        <begin position="85"/>
        <end position="89"/>
    </location>
</feature>
<feature type="strand" evidence="12">
    <location>
        <begin position="90"/>
        <end position="92"/>
    </location>
</feature>
<feature type="helix" evidence="12">
    <location>
        <begin position="93"/>
        <end position="124"/>
    </location>
</feature>
<feature type="helix" evidence="12">
    <location>
        <begin position="129"/>
        <end position="147"/>
    </location>
</feature>
<feature type="helix" evidence="12">
    <location>
        <begin position="149"/>
        <end position="156"/>
    </location>
</feature>
<feature type="helix" evidence="12">
    <location>
        <begin position="159"/>
        <end position="176"/>
    </location>
</feature>
<feature type="helix" evidence="12">
    <location>
        <begin position="179"/>
        <end position="183"/>
    </location>
</feature>
<feature type="turn" evidence="12">
    <location>
        <begin position="184"/>
        <end position="186"/>
    </location>
</feature>
<feature type="turn" evidence="12">
    <location>
        <begin position="194"/>
        <end position="196"/>
    </location>
</feature>
<feature type="helix" evidence="12">
    <location>
        <begin position="204"/>
        <end position="206"/>
    </location>
</feature>
<feature type="turn" evidence="12">
    <location>
        <begin position="213"/>
        <end position="215"/>
    </location>
</feature>
<feature type="helix" evidence="12">
    <location>
        <begin position="216"/>
        <end position="247"/>
    </location>
</feature>
<feature type="helix" evidence="12">
    <location>
        <begin position="250"/>
        <end position="279"/>
    </location>
</feature>
<feature type="strand" evidence="12">
    <location>
        <begin position="285"/>
        <end position="288"/>
    </location>
</feature>
<feature type="helix" evidence="12">
    <location>
        <begin position="290"/>
        <end position="323"/>
    </location>
</feature>
<feature type="helix" evidence="12">
    <location>
        <begin position="329"/>
        <end position="339"/>
    </location>
</feature>
<feature type="helix" evidence="12">
    <location>
        <begin position="358"/>
        <end position="370"/>
    </location>
</feature>
<feature type="helix" evidence="12">
    <location>
        <begin position="372"/>
        <end position="401"/>
    </location>
</feature>
<feature type="helix" evidence="12">
    <location>
        <begin position="407"/>
        <end position="415"/>
    </location>
</feature>
<feature type="helix" evidence="12">
    <location>
        <begin position="418"/>
        <end position="436"/>
    </location>
</feature>
<feature type="helix" evidence="12">
    <location>
        <begin position="440"/>
        <end position="465"/>
    </location>
</feature>
<feature type="turn" evidence="12">
    <location>
        <begin position="477"/>
        <end position="480"/>
    </location>
</feature>
<feature type="turn" evidence="12">
    <location>
        <begin position="484"/>
        <end position="487"/>
    </location>
</feature>
<feature type="helix" evidence="12">
    <location>
        <begin position="490"/>
        <end position="494"/>
    </location>
</feature>
<feature type="strand" evidence="12">
    <location>
        <begin position="504"/>
        <end position="506"/>
    </location>
</feature>
<feature type="strand" evidence="12">
    <location>
        <begin position="512"/>
        <end position="515"/>
    </location>
</feature>
<feature type="turn" evidence="12">
    <location>
        <begin position="516"/>
        <end position="520"/>
    </location>
</feature>
<feature type="strand" evidence="12">
    <location>
        <begin position="521"/>
        <end position="523"/>
    </location>
</feature>
<feature type="strand" evidence="12">
    <location>
        <begin position="531"/>
        <end position="536"/>
    </location>
</feature>
<feature type="strand" evidence="12">
    <location>
        <begin position="549"/>
        <end position="551"/>
    </location>
</feature>
<feature type="strand" evidence="12">
    <location>
        <begin position="555"/>
        <end position="558"/>
    </location>
</feature>
<feature type="helix" evidence="12">
    <location>
        <begin position="566"/>
        <end position="594"/>
    </location>
</feature>
<feature type="helix" evidence="12">
    <location>
        <begin position="598"/>
        <end position="601"/>
    </location>
</feature>
<feature type="helix" evidence="12">
    <location>
        <begin position="602"/>
        <end position="613"/>
    </location>
</feature>
<feature type="turn" evidence="12">
    <location>
        <begin position="614"/>
        <end position="618"/>
    </location>
</feature>
<feature type="helix" evidence="12">
    <location>
        <begin position="619"/>
        <end position="631"/>
    </location>
</feature>
<feature type="turn" evidence="12">
    <location>
        <begin position="637"/>
        <end position="640"/>
    </location>
</feature>
<feature type="strand" evidence="12">
    <location>
        <begin position="646"/>
        <end position="648"/>
    </location>
</feature>
<feature type="helix" evidence="12">
    <location>
        <begin position="653"/>
        <end position="688"/>
    </location>
</feature>
<gene>
    <name evidence="9" type="primary">Slco6c1</name>
</gene>